<gene>
    <name type="primary">HBD</name>
</gene>
<reference key="1">
    <citation type="journal article" date="1989" name="J. Biol. Chem.">
        <title>Tarsius delta- and beta-globin genes: conversions, evolution, and systematic implications.</title>
        <authorList>
            <person name="Koop B.F."/>
            <person name="Siemieniak D."/>
            <person name="Slightom J.L."/>
            <person name="Goodman M."/>
            <person name="Dunbar J."/>
            <person name="Wright P.C."/>
            <person name="Simons E.L."/>
        </authorList>
    </citation>
    <scope>NUCLEOTIDE SEQUENCE [GENOMIC DNA]</scope>
</reference>
<evidence type="ECO:0000250" key="1">
    <source>
        <dbReference type="UniProtKB" id="P02042"/>
    </source>
</evidence>
<evidence type="ECO:0000255" key="2">
    <source>
        <dbReference type="PROSITE-ProRule" id="PRU00238"/>
    </source>
</evidence>
<dbReference type="EMBL" id="M21825">
    <property type="protein sequence ID" value="AAA36932.1"/>
    <property type="molecule type" value="Genomic_DNA"/>
</dbReference>
<dbReference type="SMR" id="P61775"/>
<dbReference type="GO" id="GO:0072562">
    <property type="term" value="C:blood microparticle"/>
    <property type="evidence" value="ECO:0007669"/>
    <property type="project" value="TreeGrafter"/>
</dbReference>
<dbReference type="GO" id="GO:0031838">
    <property type="term" value="C:haptoglobin-hemoglobin complex"/>
    <property type="evidence" value="ECO:0007669"/>
    <property type="project" value="TreeGrafter"/>
</dbReference>
<dbReference type="GO" id="GO:0005833">
    <property type="term" value="C:hemoglobin complex"/>
    <property type="evidence" value="ECO:0007669"/>
    <property type="project" value="InterPro"/>
</dbReference>
<dbReference type="GO" id="GO:0031720">
    <property type="term" value="F:haptoglobin binding"/>
    <property type="evidence" value="ECO:0007669"/>
    <property type="project" value="TreeGrafter"/>
</dbReference>
<dbReference type="GO" id="GO:0020037">
    <property type="term" value="F:heme binding"/>
    <property type="evidence" value="ECO:0007669"/>
    <property type="project" value="InterPro"/>
</dbReference>
<dbReference type="GO" id="GO:0031721">
    <property type="term" value="F:hemoglobin alpha binding"/>
    <property type="evidence" value="ECO:0007669"/>
    <property type="project" value="TreeGrafter"/>
</dbReference>
<dbReference type="GO" id="GO:0046872">
    <property type="term" value="F:metal ion binding"/>
    <property type="evidence" value="ECO:0007669"/>
    <property type="project" value="UniProtKB-KW"/>
</dbReference>
<dbReference type="GO" id="GO:0043177">
    <property type="term" value="F:organic acid binding"/>
    <property type="evidence" value="ECO:0007669"/>
    <property type="project" value="TreeGrafter"/>
</dbReference>
<dbReference type="GO" id="GO:0019825">
    <property type="term" value="F:oxygen binding"/>
    <property type="evidence" value="ECO:0007669"/>
    <property type="project" value="InterPro"/>
</dbReference>
<dbReference type="GO" id="GO:0005344">
    <property type="term" value="F:oxygen carrier activity"/>
    <property type="evidence" value="ECO:0007669"/>
    <property type="project" value="UniProtKB-KW"/>
</dbReference>
<dbReference type="GO" id="GO:0004601">
    <property type="term" value="F:peroxidase activity"/>
    <property type="evidence" value="ECO:0007669"/>
    <property type="project" value="TreeGrafter"/>
</dbReference>
<dbReference type="GO" id="GO:0042744">
    <property type="term" value="P:hydrogen peroxide catabolic process"/>
    <property type="evidence" value="ECO:0007669"/>
    <property type="project" value="TreeGrafter"/>
</dbReference>
<dbReference type="CDD" id="cd08925">
    <property type="entry name" value="Hb-beta-like"/>
    <property type="match status" value="1"/>
</dbReference>
<dbReference type="FunFam" id="1.10.490.10:FF:000001">
    <property type="entry name" value="Hemoglobin subunit beta"/>
    <property type="match status" value="1"/>
</dbReference>
<dbReference type="Gene3D" id="1.10.490.10">
    <property type="entry name" value="Globins"/>
    <property type="match status" value="1"/>
</dbReference>
<dbReference type="InterPro" id="IPR000971">
    <property type="entry name" value="Globin"/>
</dbReference>
<dbReference type="InterPro" id="IPR009050">
    <property type="entry name" value="Globin-like_sf"/>
</dbReference>
<dbReference type="InterPro" id="IPR012292">
    <property type="entry name" value="Globin/Proto"/>
</dbReference>
<dbReference type="InterPro" id="IPR002337">
    <property type="entry name" value="Hemoglobin_b"/>
</dbReference>
<dbReference type="InterPro" id="IPR050056">
    <property type="entry name" value="Hemoglobin_oxygen_transport"/>
</dbReference>
<dbReference type="PANTHER" id="PTHR11442">
    <property type="entry name" value="HEMOGLOBIN FAMILY MEMBER"/>
    <property type="match status" value="1"/>
</dbReference>
<dbReference type="PANTHER" id="PTHR11442:SF42">
    <property type="entry name" value="HEMOGLOBIN SUBUNIT BETA"/>
    <property type="match status" value="1"/>
</dbReference>
<dbReference type="Pfam" id="PF00042">
    <property type="entry name" value="Globin"/>
    <property type="match status" value="1"/>
</dbReference>
<dbReference type="PRINTS" id="PR00814">
    <property type="entry name" value="BETAHAEM"/>
</dbReference>
<dbReference type="SUPFAM" id="SSF46458">
    <property type="entry name" value="Globin-like"/>
    <property type="match status" value="1"/>
</dbReference>
<dbReference type="PROSITE" id="PS01033">
    <property type="entry name" value="GLOBIN"/>
    <property type="match status" value="1"/>
</dbReference>
<name>HBD_PONPY</name>
<proteinExistence type="evidence at transcript level"/>
<protein>
    <recommendedName>
        <fullName>Hemoglobin subunit delta</fullName>
    </recommendedName>
    <alternativeName>
        <fullName>Delta-globin</fullName>
    </alternativeName>
    <alternativeName>
        <fullName>Hemoglobin delta chain</fullName>
    </alternativeName>
</protein>
<accession>P61775</accession>
<accession>P02043</accession>
<keyword id="KW-0349">Heme</keyword>
<keyword id="KW-0408">Iron</keyword>
<keyword id="KW-0479">Metal-binding</keyword>
<keyword id="KW-0561">Oxygen transport</keyword>
<keyword id="KW-0597">Phosphoprotein</keyword>
<keyword id="KW-0813">Transport</keyword>
<sequence>MVHLTPEEKTAVNALWGKVNVDAVGGEALGRLLVVYPWTQRFFESFGDLSSPDAVMGNPKVKAHGKKVLGAFSDGLAHLDNLKGTFSQLSELHCDKLHVDPENFRLLGNVLVCVLARNFGKEFTPQVQAAYQKVVAGVANALAHKYH</sequence>
<feature type="chain" id="PRO_0000053170" description="Hemoglobin subunit delta">
    <location>
        <begin position="1"/>
        <end position="147"/>
    </location>
</feature>
<feature type="domain" description="Globin" evidence="2">
    <location>
        <begin position="3"/>
        <end position="147"/>
    </location>
</feature>
<feature type="binding site" description="distal binding residue">
    <location>
        <position position="64"/>
    </location>
    <ligand>
        <name>heme b</name>
        <dbReference type="ChEBI" id="CHEBI:60344"/>
    </ligand>
    <ligandPart>
        <name>Fe</name>
        <dbReference type="ChEBI" id="CHEBI:18248"/>
    </ligandPart>
</feature>
<feature type="binding site" description="proximal binding residue">
    <location>
        <position position="93"/>
    </location>
    <ligand>
        <name>heme b</name>
        <dbReference type="ChEBI" id="CHEBI:60344"/>
    </ligand>
    <ligandPart>
        <name>Fe</name>
        <dbReference type="ChEBI" id="CHEBI:18248"/>
    </ligandPart>
</feature>
<feature type="modified residue" description="Phosphoserine" evidence="1">
    <location>
        <position position="51"/>
    </location>
</feature>
<comment type="subunit">
    <text>Heterotetramer of two delta chains and two alpha chains.</text>
</comment>
<comment type="tissue specificity">
    <text>Red blood cells.</text>
</comment>
<comment type="similarity">
    <text evidence="2">Belongs to the globin family.</text>
</comment>
<organism>
    <name type="scientific">Pongo pygmaeus</name>
    <name type="common">Bornean orangutan</name>
    <dbReference type="NCBI Taxonomy" id="9600"/>
    <lineage>
        <taxon>Eukaryota</taxon>
        <taxon>Metazoa</taxon>
        <taxon>Chordata</taxon>
        <taxon>Craniata</taxon>
        <taxon>Vertebrata</taxon>
        <taxon>Euteleostomi</taxon>
        <taxon>Mammalia</taxon>
        <taxon>Eutheria</taxon>
        <taxon>Euarchontoglires</taxon>
        <taxon>Primates</taxon>
        <taxon>Haplorrhini</taxon>
        <taxon>Catarrhini</taxon>
        <taxon>Hominidae</taxon>
        <taxon>Pongo</taxon>
    </lineage>
</organism>